<feature type="chain" id="PRO_0000290802" description="Small ribosomal subunit protein uS8">
    <location>
        <begin position="1"/>
        <end position="131"/>
    </location>
</feature>
<protein>
    <recommendedName>
        <fullName evidence="1">Small ribosomal subunit protein uS8</fullName>
    </recommendedName>
    <alternativeName>
        <fullName evidence="2">30S ribosomal protein S8</fullName>
    </alternativeName>
</protein>
<evidence type="ECO:0000255" key="1">
    <source>
        <dbReference type="HAMAP-Rule" id="MF_01302"/>
    </source>
</evidence>
<evidence type="ECO:0000305" key="2"/>
<gene>
    <name evidence="1" type="primary">rpsH</name>
    <name type="ordered locus">azo3403</name>
</gene>
<name>RS8_AZOSB</name>
<accession>A1KB13</accession>
<comment type="function">
    <text evidence="1">One of the primary rRNA binding proteins, it binds directly to 16S rRNA central domain where it helps coordinate assembly of the platform of the 30S subunit.</text>
</comment>
<comment type="subunit">
    <text evidence="1">Part of the 30S ribosomal subunit. Contacts proteins S5 and S12.</text>
</comment>
<comment type="similarity">
    <text evidence="1">Belongs to the universal ribosomal protein uS8 family.</text>
</comment>
<reference key="1">
    <citation type="journal article" date="2006" name="Nat. Biotechnol.">
        <title>Complete genome of the mutualistic, N2-fixing grass endophyte Azoarcus sp. strain BH72.</title>
        <authorList>
            <person name="Krause A."/>
            <person name="Ramakumar A."/>
            <person name="Bartels D."/>
            <person name="Battistoni F."/>
            <person name="Bekel T."/>
            <person name="Boch J."/>
            <person name="Boehm M."/>
            <person name="Friedrich F."/>
            <person name="Hurek T."/>
            <person name="Krause L."/>
            <person name="Linke B."/>
            <person name="McHardy A.C."/>
            <person name="Sarkar A."/>
            <person name="Schneiker S."/>
            <person name="Syed A.A."/>
            <person name="Thauer R."/>
            <person name="Vorhoelter F.-J."/>
            <person name="Weidner S."/>
            <person name="Puehler A."/>
            <person name="Reinhold-Hurek B."/>
            <person name="Kaiser O."/>
            <person name="Goesmann A."/>
        </authorList>
    </citation>
    <scope>NUCLEOTIDE SEQUENCE [LARGE SCALE GENOMIC DNA]</scope>
    <source>
        <strain>BH72</strain>
    </source>
</reference>
<sequence length="131" mass="14072">MSMSDPIADMLTRIRNGQQAQKASVTMPSSKVKVAIAKVLQDEGYIEGFSVREGEGKAVLDVALKYYAGRPVIERIERVSRPGLRVYKGTDDLPRVMNGLGVAIVSTPKGVMTDRAARASHVGGEVICLVA</sequence>
<keyword id="KW-1185">Reference proteome</keyword>
<keyword id="KW-0687">Ribonucleoprotein</keyword>
<keyword id="KW-0689">Ribosomal protein</keyword>
<keyword id="KW-0694">RNA-binding</keyword>
<keyword id="KW-0699">rRNA-binding</keyword>
<organism>
    <name type="scientific">Azoarcus sp. (strain BH72)</name>
    <dbReference type="NCBI Taxonomy" id="418699"/>
    <lineage>
        <taxon>Bacteria</taxon>
        <taxon>Pseudomonadati</taxon>
        <taxon>Pseudomonadota</taxon>
        <taxon>Betaproteobacteria</taxon>
        <taxon>Rhodocyclales</taxon>
        <taxon>Zoogloeaceae</taxon>
        <taxon>Azoarcus</taxon>
    </lineage>
</organism>
<proteinExistence type="inferred from homology"/>
<dbReference type="EMBL" id="AM406670">
    <property type="protein sequence ID" value="CAL96019.1"/>
    <property type="molecule type" value="Genomic_DNA"/>
</dbReference>
<dbReference type="RefSeq" id="WP_011767126.1">
    <property type="nucleotide sequence ID" value="NC_008702.1"/>
</dbReference>
<dbReference type="SMR" id="A1KB13"/>
<dbReference type="STRING" id="62928.azo3403"/>
<dbReference type="KEGG" id="aoa:dqs_3542"/>
<dbReference type="KEGG" id="azo:azo3403"/>
<dbReference type="eggNOG" id="COG0096">
    <property type="taxonomic scope" value="Bacteria"/>
</dbReference>
<dbReference type="HOGENOM" id="CLU_098428_0_0_4"/>
<dbReference type="OrthoDB" id="9802617at2"/>
<dbReference type="Proteomes" id="UP000002588">
    <property type="component" value="Chromosome"/>
</dbReference>
<dbReference type="GO" id="GO:1990904">
    <property type="term" value="C:ribonucleoprotein complex"/>
    <property type="evidence" value="ECO:0007669"/>
    <property type="project" value="UniProtKB-KW"/>
</dbReference>
<dbReference type="GO" id="GO:0005840">
    <property type="term" value="C:ribosome"/>
    <property type="evidence" value="ECO:0007669"/>
    <property type="project" value="UniProtKB-KW"/>
</dbReference>
<dbReference type="GO" id="GO:0019843">
    <property type="term" value="F:rRNA binding"/>
    <property type="evidence" value="ECO:0007669"/>
    <property type="project" value="UniProtKB-UniRule"/>
</dbReference>
<dbReference type="GO" id="GO:0003735">
    <property type="term" value="F:structural constituent of ribosome"/>
    <property type="evidence" value="ECO:0007669"/>
    <property type="project" value="InterPro"/>
</dbReference>
<dbReference type="GO" id="GO:0006412">
    <property type="term" value="P:translation"/>
    <property type="evidence" value="ECO:0007669"/>
    <property type="project" value="UniProtKB-UniRule"/>
</dbReference>
<dbReference type="FunFam" id="3.30.1370.30:FF:000002">
    <property type="entry name" value="30S ribosomal protein S8"/>
    <property type="match status" value="1"/>
</dbReference>
<dbReference type="FunFam" id="3.30.1490.10:FF:000001">
    <property type="entry name" value="30S ribosomal protein S8"/>
    <property type="match status" value="1"/>
</dbReference>
<dbReference type="Gene3D" id="3.30.1370.30">
    <property type="match status" value="1"/>
</dbReference>
<dbReference type="Gene3D" id="3.30.1490.10">
    <property type="match status" value="1"/>
</dbReference>
<dbReference type="HAMAP" id="MF_01302_B">
    <property type="entry name" value="Ribosomal_uS8_B"/>
    <property type="match status" value="1"/>
</dbReference>
<dbReference type="InterPro" id="IPR000630">
    <property type="entry name" value="Ribosomal_uS8"/>
</dbReference>
<dbReference type="InterPro" id="IPR047863">
    <property type="entry name" value="Ribosomal_uS8_CS"/>
</dbReference>
<dbReference type="InterPro" id="IPR035987">
    <property type="entry name" value="Ribosomal_uS8_sf"/>
</dbReference>
<dbReference type="NCBIfam" id="NF001109">
    <property type="entry name" value="PRK00136.1"/>
    <property type="match status" value="1"/>
</dbReference>
<dbReference type="PANTHER" id="PTHR11758">
    <property type="entry name" value="40S RIBOSOMAL PROTEIN S15A"/>
    <property type="match status" value="1"/>
</dbReference>
<dbReference type="Pfam" id="PF00410">
    <property type="entry name" value="Ribosomal_S8"/>
    <property type="match status" value="1"/>
</dbReference>
<dbReference type="SUPFAM" id="SSF56047">
    <property type="entry name" value="Ribosomal protein S8"/>
    <property type="match status" value="1"/>
</dbReference>
<dbReference type="PROSITE" id="PS00053">
    <property type="entry name" value="RIBOSOMAL_S8"/>
    <property type="match status" value="1"/>
</dbReference>